<sequence>MRFSTLVSLAAWAAAALACDSCSEPGKPAEHKRLVRRMQPEALGALTKPKGPLEWGQINFLHTTDTHGWLEGHLKEQNYGADWGDYSSFVKHMRQKADRLRVDLLLIDCGDLHDGNGLSDSTSPNGVISNEIFSRVDYDLLSIGNHELYVTDVAYETFANFSKVYGERYVTSNVQIINKETGEYEYIGSKYRYFTTKHGLKVMAFGVLFDFTGNSNVSKVIKAADLVQESWFIDAVKTPKPVDLFIIFGHTPARTDDKFPTLRTLRQKIQELRPGVPIQAFGGHNHVRDFVVYDETSTALGSGRYCETLGWLSMTGINSRTFRGSMKPRGVPNPTRRAIKGNATTSTQPYQHPRKGLDLRYARRYLDWNRLTFAYHASKSQDRQFDTQKGLKITHDITDARKQLNTSTVLGCVPETYCMSCVPFEAKNNIYQLVIDMLAKVVVKEDRADKPRLLLLNTGGVRFDLVKGPFTKDDEYIVYPFKNQFQYLPDVPYSIAKELLDALNKGPYQRRSEEYSPMAPQLSTNEVCANPSPEFVQLKRREAPQPYRPITRRTIDSSMLYPGYVTSDDFGLDGDDTPHSKIPYFKVPIDIQANASFPTNGSMPTVVDLAFVDYIGAKYVIPALNKLGGKYSASDIQSYKDFGSSSFLREYALEFWQEGLPNCTTN</sequence>
<comment type="subcellular location">
    <subcellularLocation>
        <location evidence="5">Secreted</location>
    </subcellularLocation>
</comment>
<comment type="induction">
    <text evidence="4">Expression is up-regulated in presence of human keratinocytes.</text>
</comment>
<protein>
    <recommendedName>
        <fullName evidence="6">Secreted protein ARB_01864</fullName>
    </recommendedName>
</protein>
<gene>
    <name type="ORF">ARB_01864</name>
</gene>
<name>A1864_ARTBC</name>
<dbReference type="EMBL" id="ABSU01000023">
    <property type="protein sequence ID" value="EFE31245.1"/>
    <property type="molecule type" value="Genomic_DNA"/>
</dbReference>
<dbReference type="RefSeq" id="XP_003011885.1">
    <property type="nucleotide sequence ID" value="XM_003011839.1"/>
</dbReference>
<dbReference type="SMR" id="D4B093"/>
<dbReference type="STRING" id="663331.D4B093"/>
<dbReference type="GeneID" id="9526437"/>
<dbReference type="KEGG" id="abe:ARB_01864"/>
<dbReference type="eggNOG" id="KOG4419">
    <property type="taxonomic scope" value="Eukaryota"/>
</dbReference>
<dbReference type="HOGENOM" id="CLU_019028_0_0_1"/>
<dbReference type="OMA" id="DWNRNTF"/>
<dbReference type="OrthoDB" id="7722975at2759"/>
<dbReference type="Proteomes" id="UP000008866">
    <property type="component" value="Unassembled WGS sequence"/>
</dbReference>
<dbReference type="GO" id="GO:0005829">
    <property type="term" value="C:cytosol"/>
    <property type="evidence" value="ECO:0007669"/>
    <property type="project" value="TreeGrafter"/>
</dbReference>
<dbReference type="GO" id="GO:0005576">
    <property type="term" value="C:extracellular region"/>
    <property type="evidence" value="ECO:0007669"/>
    <property type="project" value="UniProtKB-SubCell"/>
</dbReference>
<dbReference type="GO" id="GO:0016787">
    <property type="term" value="F:hydrolase activity"/>
    <property type="evidence" value="ECO:0007669"/>
    <property type="project" value="InterPro"/>
</dbReference>
<dbReference type="GO" id="GO:0009166">
    <property type="term" value="P:nucleotide catabolic process"/>
    <property type="evidence" value="ECO:0007669"/>
    <property type="project" value="InterPro"/>
</dbReference>
<dbReference type="CDD" id="cd07407">
    <property type="entry name" value="MPP_YHR202W_N"/>
    <property type="match status" value="1"/>
</dbReference>
<dbReference type="Gene3D" id="3.60.21.10">
    <property type="match status" value="1"/>
</dbReference>
<dbReference type="Gene3D" id="3.90.780.10">
    <property type="entry name" value="5'-Nucleotidase, C-terminal domain"/>
    <property type="match status" value="1"/>
</dbReference>
<dbReference type="InterPro" id="IPR036907">
    <property type="entry name" value="5'-Nucleotdase_C_sf"/>
</dbReference>
<dbReference type="InterPro" id="IPR006179">
    <property type="entry name" value="5_nucleotidase/apyrase"/>
</dbReference>
<dbReference type="InterPro" id="IPR004843">
    <property type="entry name" value="Calcineurin-like_PHP_ApaH"/>
</dbReference>
<dbReference type="InterPro" id="IPR029052">
    <property type="entry name" value="Metallo-depent_PP-like"/>
</dbReference>
<dbReference type="InterPro" id="IPR053828">
    <property type="entry name" value="Nucleosidase_C"/>
</dbReference>
<dbReference type="InterPro" id="IPR014485">
    <property type="entry name" value="Pesterase_C1039"/>
</dbReference>
<dbReference type="InterPro" id="IPR041823">
    <property type="entry name" value="YHR202W_N"/>
</dbReference>
<dbReference type="PANTHER" id="PTHR11575">
    <property type="entry name" value="5'-NUCLEOTIDASE-RELATED"/>
    <property type="match status" value="1"/>
</dbReference>
<dbReference type="PANTHER" id="PTHR11575:SF22">
    <property type="entry name" value="ADL392WP"/>
    <property type="match status" value="1"/>
</dbReference>
<dbReference type="Pfam" id="PF00149">
    <property type="entry name" value="Metallophos"/>
    <property type="match status" value="1"/>
</dbReference>
<dbReference type="Pfam" id="PF21953">
    <property type="entry name" value="NadN_nucleosid_C"/>
    <property type="match status" value="1"/>
</dbReference>
<dbReference type="PIRSF" id="PIRSF017316">
    <property type="entry name" value="Pesterase_C1039"/>
    <property type="match status" value="1"/>
</dbReference>
<dbReference type="SUPFAM" id="SSF55816">
    <property type="entry name" value="5'-nucleotidase (syn. UDP-sugar hydrolase), C-terminal domain"/>
    <property type="match status" value="1"/>
</dbReference>
<dbReference type="SUPFAM" id="SSF56300">
    <property type="entry name" value="Metallo-dependent phosphatases"/>
    <property type="match status" value="1"/>
</dbReference>
<organism>
    <name type="scientific">Arthroderma benhamiae (strain ATCC MYA-4681 / CBS 112371)</name>
    <name type="common">Trichophyton mentagrophytes</name>
    <dbReference type="NCBI Taxonomy" id="663331"/>
    <lineage>
        <taxon>Eukaryota</taxon>
        <taxon>Fungi</taxon>
        <taxon>Dikarya</taxon>
        <taxon>Ascomycota</taxon>
        <taxon>Pezizomycotina</taxon>
        <taxon>Eurotiomycetes</taxon>
        <taxon>Eurotiomycetidae</taxon>
        <taxon>Onygenales</taxon>
        <taxon>Arthrodermataceae</taxon>
        <taxon>Trichophyton</taxon>
    </lineage>
</organism>
<reference key="1">
    <citation type="journal article" date="2011" name="Genome Biol.">
        <title>Comparative and functional genomics provide insights into the pathogenicity of dermatophytic fungi.</title>
        <authorList>
            <person name="Burmester A."/>
            <person name="Shelest E."/>
            <person name="Gloeckner G."/>
            <person name="Heddergott C."/>
            <person name="Schindler S."/>
            <person name="Staib P."/>
            <person name="Heidel A."/>
            <person name="Felder M."/>
            <person name="Petzold A."/>
            <person name="Szafranski K."/>
            <person name="Feuermann M."/>
            <person name="Pedruzzi I."/>
            <person name="Priebe S."/>
            <person name="Groth M."/>
            <person name="Winkler R."/>
            <person name="Li W."/>
            <person name="Kniemeyer O."/>
            <person name="Schroeckh V."/>
            <person name="Hertweck C."/>
            <person name="Hube B."/>
            <person name="White T.C."/>
            <person name="Platzer M."/>
            <person name="Guthke R."/>
            <person name="Heitman J."/>
            <person name="Woestemeyer J."/>
            <person name="Zipfel P.F."/>
            <person name="Monod M."/>
            <person name="Brakhage A.A."/>
        </authorList>
    </citation>
    <scope>NUCLEOTIDE SEQUENCE [LARGE SCALE GENOMIC DNA]</scope>
    <scope>INDUCTION</scope>
    <source>
        <strain>ATCC MYA-4681 / CBS 112371</strain>
    </source>
</reference>
<reference key="2">
    <citation type="journal article" date="2011" name="Proteomics">
        <title>Identification of novel secreted proteases during extracellular proteolysis by dermatophytes at acidic pH.</title>
        <authorList>
            <person name="Sriranganadane D."/>
            <person name="Waridel P."/>
            <person name="Salamin K."/>
            <person name="Feuermann M."/>
            <person name="Mignon B."/>
            <person name="Staib P."/>
            <person name="Neuhaus J.M."/>
            <person name="Quadroni M."/>
            <person name="Monod M."/>
        </authorList>
    </citation>
    <scope>IDENTIFICATION BY MASS SPECTROMETRY</scope>
    <scope>SUBCELLULAR LOCATION</scope>
</reference>
<evidence type="ECO:0000255" key="1"/>
<evidence type="ECO:0000255" key="2">
    <source>
        <dbReference type="PROSITE-ProRule" id="PRU00498"/>
    </source>
</evidence>
<evidence type="ECO:0000256" key="3">
    <source>
        <dbReference type="SAM" id="MobiDB-lite"/>
    </source>
</evidence>
<evidence type="ECO:0000269" key="4">
    <source>
    </source>
</evidence>
<evidence type="ECO:0000269" key="5">
    <source>
    </source>
</evidence>
<evidence type="ECO:0000305" key="6"/>
<keyword id="KW-0325">Glycoprotein</keyword>
<keyword id="KW-1185">Reference proteome</keyword>
<keyword id="KW-0964">Secreted</keyword>
<keyword id="KW-0732">Signal</keyword>
<feature type="signal peptide" evidence="1">
    <location>
        <begin position="1"/>
        <end position="18"/>
    </location>
</feature>
<feature type="chain" id="PRO_0000434920" description="Secreted protein ARB_01864">
    <location>
        <begin position="19"/>
        <end position="666"/>
    </location>
</feature>
<feature type="region of interest" description="Disordered" evidence="3">
    <location>
        <begin position="323"/>
        <end position="353"/>
    </location>
</feature>
<feature type="glycosylation site" description="N-linked (GlcNAc...) asparagine" evidence="2">
    <location>
        <position position="160"/>
    </location>
</feature>
<feature type="glycosylation site" description="N-linked (GlcNAc...) asparagine" evidence="2">
    <location>
        <position position="216"/>
    </location>
</feature>
<feature type="glycosylation site" description="N-linked (GlcNAc...) asparagine" evidence="2">
    <location>
        <position position="342"/>
    </location>
</feature>
<feature type="glycosylation site" description="N-linked (GlcNAc...) asparagine" evidence="2">
    <location>
        <position position="405"/>
    </location>
</feature>
<feature type="glycosylation site" description="N-linked (GlcNAc...) asparagine" evidence="2">
    <location>
        <position position="594"/>
    </location>
</feature>
<feature type="glycosylation site" description="N-linked (GlcNAc...) asparagine" evidence="2">
    <location>
        <position position="600"/>
    </location>
</feature>
<feature type="glycosylation site" description="N-linked (GlcNAc...) asparagine" evidence="2">
    <location>
        <position position="662"/>
    </location>
</feature>
<accession>D4B093</accession>
<proteinExistence type="evidence at protein level"/>